<protein>
    <recommendedName>
        <fullName>Maintenance of telomere capping protein 6</fullName>
    </recommendedName>
</protein>
<feature type="signal peptide" evidence="2">
    <location>
        <begin position="1"/>
        <end position="20"/>
    </location>
</feature>
<feature type="chain" id="PRO_0000407787" description="Maintenance of telomere capping protein 6">
    <location>
        <begin position="21"/>
        <end position="526"/>
    </location>
</feature>
<feature type="topological domain" description="Extracellular" evidence="2">
    <location>
        <begin position="21"/>
        <end position="477"/>
    </location>
</feature>
<feature type="transmembrane region" description="Helical" evidence="2">
    <location>
        <begin position="478"/>
        <end position="498"/>
    </location>
</feature>
<feature type="topological domain" description="Cytoplasmic" evidence="2">
    <location>
        <begin position="499"/>
        <end position="526"/>
    </location>
</feature>
<feature type="glycosylation site" description="N-linked (GlcNAc...) asparagine" evidence="2">
    <location>
        <position position="32"/>
    </location>
</feature>
<feature type="glycosylation site" description="N-linked (GlcNAc...) asparagine" evidence="2">
    <location>
        <position position="60"/>
    </location>
</feature>
<feature type="glycosylation site" description="N-linked (GlcNAc...) asparagine" evidence="2">
    <location>
        <position position="80"/>
    </location>
</feature>
<feature type="glycosylation site" description="N-linked (GlcNAc...) asparagine" evidence="2">
    <location>
        <position position="89"/>
    </location>
</feature>
<feature type="glycosylation site" description="N-linked (GlcNAc...) asparagine" evidence="2">
    <location>
        <position position="156"/>
    </location>
</feature>
<feature type="glycosylation site" description="N-linked (GlcNAc...) asparagine" evidence="2">
    <location>
        <position position="171"/>
    </location>
</feature>
<feature type="glycosylation site" description="N-linked (GlcNAc...) asparagine" evidence="2">
    <location>
        <position position="175"/>
    </location>
</feature>
<feature type="glycosylation site" description="N-linked (GlcNAc...) asparagine" evidence="2">
    <location>
        <position position="202"/>
    </location>
</feature>
<feature type="glycosylation site" description="N-linked (GlcNAc...) asparagine" evidence="2">
    <location>
        <position position="240"/>
    </location>
</feature>
<feature type="glycosylation site" description="N-linked (GlcNAc...) asparagine" evidence="2">
    <location>
        <position position="259"/>
    </location>
</feature>
<feature type="glycosylation site" description="N-linked (GlcNAc...) asparagine" evidence="2">
    <location>
        <position position="311"/>
    </location>
</feature>
<feature type="glycosylation site" description="N-linked (GlcNAc...) asparagine" evidence="2">
    <location>
        <position position="362"/>
    </location>
</feature>
<feature type="glycosylation site" description="N-linked (GlcNAc...) asparagine" evidence="2">
    <location>
        <position position="433"/>
    </location>
</feature>
<name>MTC6_YEAS6</name>
<sequence>MWILIYLFIIWSSLRTWVTAVDSTTTVGDDLNETVSASVWPTMSPQMTVAFRSQRDVMGNLTIDQLPYVGLNLRRVLLNNETSMVNEGNNTRLLTLFKSMLSSEANAFVLDLEQYNNDLRVVDTTLLFSDVLIALESFIFSTQNNLYANIIVLLLNISAPELDSTEYRHQNQTLNTTYILDKNLGNSFIYKPTDLQSDRAKNNTWNIYGKSSIDGWPTLGSVLYEQKKRLVIGELTDFFNETTAPYIFPHDVFHYEQGNSTLDCPSTVEGLTDLSSIHWRFLDSLFNSVDIKEYISCGLSPIISNSAYVNNVTQLADIIHEGSVWSWDSDQPSVTQSTSKSGSSSGTLEAYNCVLLYYFANNETVTWRVGNCYNSNIGLCRYENMAFRWLVRSNKATYFDFDSYQGSKCPDQYSFNIPRSPLEQRSFIAYMRNSSFSDTQIWIDLNSISVSNCWVSGGPYASCPYEKVISRRNFVTMMVPASVCSFALLCIVVYLSVLRVPIYDNRKNWRRVINKISKSELEGVPS</sequence>
<accession>B5VK80</accession>
<gene>
    <name type="primary">MTC6</name>
    <name type="ORF">AWRI1631_82020</name>
</gene>
<organism>
    <name type="scientific">Saccharomyces cerevisiae (strain AWRI1631)</name>
    <name type="common">Baker's yeast</name>
    <dbReference type="NCBI Taxonomy" id="545124"/>
    <lineage>
        <taxon>Eukaryota</taxon>
        <taxon>Fungi</taxon>
        <taxon>Dikarya</taxon>
        <taxon>Ascomycota</taxon>
        <taxon>Saccharomycotina</taxon>
        <taxon>Saccharomycetes</taxon>
        <taxon>Saccharomycetales</taxon>
        <taxon>Saccharomycetaceae</taxon>
        <taxon>Saccharomyces</taxon>
    </lineage>
</organism>
<reference key="1">
    <citation type="journal article" date="2008" name="FEMS Yeast Res.">
        <title>Comparative genome analysis of a Saccharomyces cerevisiae wine strain.</title>
        <authorList>
            <person name="Borneman A.R."/>
            <person name="Forgan A.H."/>
            <person name="Pretorius I.S."/>
            <person name="Chambers P.J."/>
        </authorList>
    </citation>
    <scope>NUCLEOTIDE SEQUENCE [LARGE SCALE GENOMIC DNA]</scope>
    <source>
        <strain>AWRI1631</strain>
    </source>
</reference>
<comment type="function">
    <text evidence="1">May be involved in telomere capping.</text>
</comment>
<comment type="subcellular location">
    <subcellularLocation>
        <location evidence="3">Membrane</location>
        <topology evidence="3">Single-pass type I membrane protein</topology>
    </subcellularLocation>
</comment>
<comment type="similarity">
    <text evidence="3">Belongs to the MTC6 family.</text>
</comment>
<proteinExistence type="inferred from homology"/>
<dbReference type="EMBL" id="ABSV01001141">
    <property type="protein sequence ID" value="EDZ71656.1"/>
    <property type="molecule type" value="Genomic_DNA"/>
</dbReference>
<dbReference type="GlyCosmos" id="B5VK80">
    <property type="glycosylation" value="13 sites, No reported glycans"/>
</dbReference>
<dbReference type="Proteomes" id="UP000008988">
    <property type="component" value="Unassembled WGS sequence"/>
</dbReference>
<dbReference type="GO" id="GO:0016020">
    <property type="term" value="C:membrane"/>
    <property type="evidence" value="ECO:0007669"/>
    <property type="project" value="UniProtKB-SubCell"/>
</dbReference>
<dbReference type="InterPro" id="IPR051008">
    <property type="entry name" value="Telomere_Capping_Maintenance"/>
</dbReference>
<dbReference type="PANTHER" id="PTHR35518:SF2">
    <property type="entry name" value="MAINTENANCE OF TELOMERE CAPPING PROTEIN 6"/>
    <property type="match status" value="1"/>
</dbReference>
<dbReference type="PANTHER" id="PTHR35518">
    <property type="entry name" value="MAINTENANCE OF TELOMOERE CAPPING"/>
    <property type="match status" value="1"/>
</dbReference>
<dbReference type="Pfam" id="PF25506">
    <property type="entry name" value="TIM-barrel_MTC6"/>
    <property type="match status" value="1"/>
</dbReference>
<evidence type="ECO:0000250" key="1"/>
<evidence type="ECO:0000255" key="2"/>
<evidence type="ECO:0000305" key="3"/>
<keyword id="KW-0325">Glycoprotein</keyword>
<keyword id="KW-0472">Membrane</keyword>
<keyword id="KW-0732">Signal</keyword>
<keyword id="KW-0812">Transmembrane</keyword>
<keyword id="KW-1133">Transmembrane helix</keyword>